<comment type="function">
    <text evidence="5 6">Cleaves the 2'-5' phosphodiester linkage at the branch point of lariat intron pre-mRNAs after splicing and converts them into linear molecules that are subsequently degraded, thereby facilitating ribonucleotide turnover (PubMed:35459748). It also participates in Ty1 retrovirus-like transposition via an RNA lariat intermediate in cDNA synthesis (PubMed:14716018).</text>
</comment>
<comment type="cofactor">
    <cofactor evidence="6">
        <name>Fe(2+)</name>
        <dbReference type="ChEBI" id="CHEBI:29033"/>
    </cofactor>
    <cofactor evidence="6">
        <name>Zn(2+)</name>
        <dbReference type="ChEBI" id="CHEBI:29105"/>
    </cofactor>
    <cofactor evidence="6">
        <name>Mn(2+)</name>
        <dbReference type="ChEBI" id="CHEBI:29035"/>
    </cofactor>
    <text evidence="6">Binds 2 divalent metal cations.</text>
</comment>
<comment type="activity regulation">
    <text evidence="6">Active in presence of diverse metals including Fe(2+), Zn(2+) and Mn(2+) (PubMed:35459748). Binds two metal cations in two adjacent alpha and beta metal-binding pockets (PubMed:35459748). The activity is the highest with Fe(2+) bound to the 2 metal-binding sites (PubMed:35459748). Activity is low with Zn(2+) and Mn(2+) (PubMed:35459748).</text>
</comment>
<comment type="biophysicochemical properties">
    <kinetics>
        <KM evidence="6">0.7 uM for 10-mer branched RNA AK88 (when bound to Fe(2+) and Zn(2+) and at pH 7)</KM>
        <KM evidence="6">1.2 uM for 10-mer branched RNA AK88 (when bound to Fe(2+) and at pH 7)</KM>
        <KM evidence="6">0.5 uM for 10-mer branched RNA AK88 (when bound to Mn(2+) and at pH 7)</KM>
        <text evidence="6">kcat is 5.6 sec(-1) with 10-mer branched RNA AK88 as substrate (when bound to Fe(2+) and Zn(2+) and at pH 7) (PubMed:35459748). kcat is 9.2 sec(-1) with 10-mer branched RNA AK88 as substrate (when bound to Fe(2+) and at pH 7) (PubMed:35459748). kcat is 1.1 sec(-1) with 10-mer branched RNA AK88 as substrate (when bound to Mn(2+) and at pH 7) (PubMed:35459748). kcat is 0.2 sec(-1) with 10-mer branched RNA AK88 as substrate (when bound to Zn(2+) and at pH 7) (PubMed:35459748).</text>
    </kinetics>
</comment>
<comment type="subcellular location">
    <subcellularLocation>
        <location evidence="3">Nucleus</location>
    </subcellularLocation>
    <subcellularLocation>
        <location evidence="3">Cytoplasm</location>
    </subcellularLocation>
</comment>
<comment type="miscellaneous">
    <text evidence="4">Present with 1130 molecules/cell in log phase SD medium.</text>
</comment>
<comment type="similarity">
    <text evidence="7">Belongs to the lariat debranching enzyme family.</text>
</comment>
<reference key="1">
    <citation type="journal article" date="1991" name="Cell">
        <title>Isolation and characterization of the gene encoding yeast debranching enzyme.</title>
        <authorList>
            <person name="Chapman K.B."/>
            <person name="Boeke J.D."/>
        </authorList>
    </citation>
    <scope>NUCLEOTIDE SEQUENCE [GENOMIC DNA]</scope>
</reference>
<reference key="2">
    <citation type="journal article" date="1994" name="Yeast">
        <title>DNA sequencing of a 36.2 kb fragment located between the FAS1 and LAP loci of chromosome XI of Saccharomyces cerevisiae.</title>
        <authorList>
            <person name="Vandenbol M."/>
            <person name="Bolle P.-A."/>
            <person name="Dion C."/>
            <person name="Portetelle D."/>
            <person name="Hilger F."/>
        </authorList>
    </citation>
    <scope>NUCLEOTIDE SEQUENCE [GENOMIC DNA]</scope>
    <source>
        <strain>ATCC 204508 / S288c</strain>
    </source>
</reference>
<reference key="3">
    <citation type="journal article" date="1994" name="Nature">
        <title>Complete DNA sequence of yeast chromosome XI.</title>
        <authorList>
            <person name="Dujon B."/>
            <person name="Alexandraki D."/>
            <person name="Andre B."/>
            <person name="Ansorge W."/>
            <person name="Baladron V."/>
            <person name="Ballesta J.P.G."/>
            <person name="Banrevi A."/>
            <person name="Bolle P.-A."/>
            <person name="Bolotin-Fukuhara M."/>
            <person name="Bossier P."/>
            <person name="Bou G."/>
            <person name="Boyer J."/>
            <person name="Buitrago M.J."/>
            <person name="Cheret G."/>
            <person name="Colleaux L."/>
            <person name="Daignan-Fornier B."/>
            <person name="del Rey F."/>
            <person name="Dion C."/>
            <person name="Domdey H."/>
            <person name="Duesterhoeft A."/>
            <person name="Duesterhus S."/>
            <person name="Entian K.-D."/>
            <person name="Erfle H."/>
            <person name="Esteban P.F."/>
            <person name="Feldmann H."/>
            <person name="Fernandes L."/>
            <person name="Fobo G.M."/>
            <person name="Fritz C."/>
            <person name="Fukuhara H."/>
            <person name="Gabel C."/>
            <person name="Gaillon L."/>
            <person name="Garcia-Cantalejo J.M."/>
            <person name="Garcia-Ramirez J.J."/>
            <person name="Gent M.E."/>
            <person name="Ghazvini M."/>
            <person name="Goffeau A."/>
            <person name="Gonzalez A."/>
            <person name="Grothues D."/>
            <person name="Guerreiro P."/>
            <person name="Hegemann J.H."/>
            <person name="Hewitt N."/>
            <person name="Hilger F."/>
            <person name="Hollenberg C.P."/>
            <person name="Horaitis O."/>
            <person name="Indge K.J."/>
            <person name="Jacquier A."/>
            <person name="James C.M."/>
            <person name="Jauniaux J.-C."/>
            <person name="Jimenez A."/>
            <person name="Keuchel H."/>
            <person name="Kirchrath L."/>
            <person name="Kleine K."/>
            <person name="Koetter P."/>
            <person name="Legrain P."/>
            <person name="Liebl S."/>
            <person name="Louis E.J."/>
            <person name="Maia e Silva A."/>
            <person name="Marck C."/>
            <person name="Monnier A.-L."/>
            <person name="Moestl D."/>
            <person name="Mueller S."/>
            <person name="Obermaier B."/>
            <person name="Oliver S.G."/>
            <person name="Pallier C."/>
            <person name="Pascolo S."/>
            <person name="Pfeiffer F."/>
            <person name="Philippsen P."/>
            <person name="Planta R.J."/>
            <person name="Pohl F.M."/>
            <person name="Pohl T.M."/>
            <person name="Poehlmann R."/>
            <person name="Portetelle D."/>
            <person name="Purnelle B."/>
            <person name="Puzos V."/>
            <person name="Ramezani Rad M."/>
            <person name="Rasmussen S.W."/>
            <person name="Remacha M.A."/>
            <person name="Revuelta J.L."/>
            <person name="Richard G.-F."/>
            <person name="Rieger M."/>
            <person name="Rodrigues-Pousada C."/>
            <person name="Rose M."/>
            <person name="Rupp T."/>
            <person name="Santos M.A."/>
            <person name="Schwager C."/>
            <person name="Sensen C."/>
            <person name="Skala J."/>
            <person name="Soares H."/>
            <person name="Sor F."/>
            <person name="Stegemann J."/>
            <person name="Tettelin H."/>
            <person name="Thierry A."/>
            <person name="Tzermia M."/>
            <person name="Urrestarazu L.A."/>
            <person name="van Dyck L."/>
            <person name="van Vliet-Reedijk J.C."/>
            <person name="Valens M."/>
            <person name="Vandenbol M."/>
            <person name="Vilela C."/>
            <person name="Vissers S."/>
            <person name="von Wettstein D."/>
            <person name="Voss H."/>
            <person name="Wiemann S."/>
            <person name="Xu G."/>
            <person name="Zimmermann J."/>
            <person name="Haasemann M."/>
            <person name="Becker I."/>
            <person name="Mewes H.-W."/>
        </authorList>
    </citation>
    <scope>NUCLEOTIDE SEQUENCE [LARGE SCALE GENOMIC DNA]</scope>
    <source>
        <strain>ATCC 204508 / S288c</strain>
    </source>
</reference>
<reference key="4">
    <citation type="journal article" date="2014" name="G3 (Bethesda)">
        <title>The reference genome sequence of Saccharomyces cerevisiae: Then and now.</title>
        <authorList>
            <person name="Engel S.R."/>
            <person name="Dietrich F.S."/>
            <person name="Fisk D.G."/>
            <person name="Binkley G."/>
            <person name="Balakrishnan R."/>
            <person name="Costanzo M.C."/>
            <person name="Dwight S.S."/>
            <person name="Hitz B.C."/>
            <person name="Karra K."/>
            <person name="Nash R.S."/>
            <person name="Weng S."/>
            <person name="Wong E.D."/>
            <person name="Lloyd P."/>
            <person name="Skrzypek M.S."/>
            <person name="Miyasato S.R."/>
            <person name="Simison M."/>
            <person name="Cherry J.M."/>
        </authorList>
    </citation>
    <scope>GENOME REANNOTATION</scope>
    <source>
        <strain>ATCC 204508 / S288c</strain>
    </source>
</reference>
<reference key="5">
    <citation type="journal article" date="1992" name="Proc. Natl. Acad. Sci. U.S.A.">
        <title>Primary structure, import, and assembly of the yeast homolog of succinate dehydrogenase flavoprotein.</title>
        <authorList>
            <person name="Schuelke N."/>
            <person name="Blobel G."/>
            <person name="Pain D."/>
        </authorList>
    </citation>
    <scope>NUCLEOTIDE SEQUENCE [GENOMIC DNA] OF 1-117</scope>
</reference>
<reference key="6">
    <citation type="journal article" date="2003" name="Nature">
        <title>Global analysis of protein localization in budding yeast.</title>
        <authorList>
            <person name="Huh W.-K."/>
            <person name="Falvo J.V."/>
            <person name="Gerke L.C."/>
            <person name="Carroll A.S."/>
            <person name="Howson R.W."/>
            <person name="Weissman J.S."/>
            <person name="O'Shea E.K."/>
        </authorList>
    </citation>
    <scope>SUBCELLULAR LOCATION [LARGE SCALE ANALYSIS]</scope>
</reference>
<reference key="7">
    <citation type="journal article" date="2003" name="Nature">
        <title>Global analysis of protein expression in yeast.</title>
        <authorList>
            <person name="Ghaemmaghami S."/>
            <person name="Huh W.-K."/>
            <person name="Bower K."/>
            <person name="Howson R.W."/>
            <person name="Belle A."/>
            <person name="Dephoure N."/>
            <person name="O'Shea E.K."/>
            <person name="Weissman J.S."/>
        </authorList>
    </citation>
    <scope>LEVEL OF PROTEIN EXPRESSION [LARGE SCALE ANALYSIS]</scope>
</reference>
<reference key="8">
    <citation type="journal article" date="2004" name="Science">
        <title>RNA branching and debranching in the yeast retrovirus-like element Ty1.</title>
        <authorList>
            <person name="Cheng Z."/>
            <person name="Menees T.M."/>
        </authorList>
    </citation>
    <scope>FUNCTION</scope>
</reference>
<reference key="9">
    <citation type="journal article" date="2007" name="J. Proteome Res.">
        <title>Large-scale phosphorylation analysis of alpha-factor-arrested Saccharomyces cerevisiae.</title>
        <authorList>
            <person name="Li X."/>
            <person name="Gerber S.A."/>
            <person name="Rudner A.D."/>
            <person name="Beausoleil S.A."/>
            <person name="Haas W."/>
            <person name="Villen J."/>
            <person name="Elias J.E."/>
            <person name="Gygi S.P."/>
        </authorList>
    </citation>
    <scope>PHOSPHORYLATION [LARGE SCALE ANALYSIS] AT SER-269</scope>
    <scope>IDENTIFICATION BY MASS SPECTROMETRY [LARGE SCALE ANALYSIS]</scope>
    <source>
        <strain>ADR376</strain>
    </source>
</reference>
<reference key="10">
    <citation type="journal article" date="2009" name="Science">
        <title>Global analysis of Cdk1 substrate phosphorylation sites provides insights into evolution.</title>
        <authorList>
            <person name="Holt L.J."/>
            <person name="Tuch B.B."/>
            <person name="Villen J."/>
            <person name="Johnson A.D."/>
            <person name="Gygi S.P."/>
            <person name="Morgan D.O."/>
        </authorList>
    </citation>
    <scope>PHOSPHORYLATION [LARGE SCALE ANALYSIS] AT SER-269</scope>
    <scope>IDENTIFICATION BY MASS SPECTROMETRY [LARGE SCALE ANALYSIS]</scope>
</reference>
<reference key="11">
    <citation type="journal article" date="2022" name="RNA">
        <title>Metal content and kinetic properties of yeast RNA lariat debranching enzyme Dbr1.</title>
        <authorList>
            <person name="Clark N.E."/>
            <person name="Katolik A."/>
            <person name="Taggart A.J."/>
            <person name="Buerer L."/>
            <person name="Holloway S.P."/>
            <person name="Miller N."/>
            <person name="Phillips J.D."/>
            <person name="Farrell C.P."/>
            <person name="Damha M.J."/>
            <person name="Fairbrother W.G."/>
        </authorList>
    </citation>
    <scope>FUNCTION</scope>
    <scope>CATALYTIC ACTIVITY</scope>
    <scope>COFACTOR</scope>
    <scope>ACTIVITY REGULATION</scope>
    <scope>BIOPHYSICOCHEMICAL PROPERTIES</scope>
</reference>
<feature type="chain" id="PRO_0000079797" description="Lariat debranching enzyme">
    <location>
        <begin position="1"/>
        <end position="405"/>
    </location>
</feature>
<feature type="region of interest" description="Lariat recognition loop" evidence="1">
    <location>
        <begin position="125"/>
        <end position="159"/>
    </location>
</feature>
<feature type="region of interest" description="Disordered" evidence="2">
    <location>
        <begin position="242"/>
        <end position="277"/>
    </location>
</feature>
<feature type="compositionally biased region" description="Acidic residues" evidence="2">
    <location>
        <begin position="264"/>
        <end position="274"/>
    </location>
</feature>
<feature type="binding site" evidence="1">
    <location>
        <position position="11"/>
    </location>
    <ligand>
        <name>a divalent metal cation</name>
        <dbReference type="ChEBI" id="CHEBI:60240"/>
        <label>1</label>
    </ligand>
</feature>
<feature type="binding site" evidence="1">
    <location>
        <position position="13"/>
    </location>
    <ligand>
        <name>a divalent metal cation</name>
        <dbReference type="ChEBI" id="CHEBI:60240"/>
        <label>1</label>
    </ligand>
</feature>
<feature type="binding site" evidence="1">
    <location>
        <position position="40"/>
    </location>
    <ligand>
        <name>a divalent metal cation</name>
        <dbReference type="ChEBI" id="CHEBI:60240"/>
        <label>2</label>
    </ligand>
</feature>
<feature type="binding site" evidence="1">
    <location>
        <position position="85"/>
    </location>
    <ligand>
        <name>a divalent metal cation</name>
        <dbReference type="ChEBI" id="CHEBI:60240"/>
        <label>2</label>
    </ligand>
</feature>
<feature type="binding site" evidence="1">
    <location>
        <position position="179"/>
    </location>
    <ligand>
        <name>a divalent metal cation</name>
        <dbReference type="ChEBI" id="CHEBI:60240"/>
        <label>2</label>
    </ligand>
</feature>
<feature type="binding site" evidence="1">
    <location>
        <position position="231"/>
    </location>
    <ligand>
        <name>a divalent metal cation</name>
        <dbReference type="ChEBI" id="CHEBI:60240"/>
        <label>2</label>
    </ligand>
</feature>
<feature type="binding site" evidence="1">
    <location>
        <position position="233"/>
    </location>
    <ligand>
        <name>a divalent metal cation</name>
        <dbReference type="ChEBI" id="CHEBI:60240"/>
        <label>1</label>
    </ligand>
</feature>
<feature type="modified residue" description="Phosphoserine" evidence="8 9">
    <location>
        <position position="269"/>
    </location>
</feature>
<proteinExistence type="evidence at protein level"/>
<name>DBR1_YEAST</name>
<sequence length="405" mass="47741">MTKLRIAVQGCCHGQLNQIYKEVSRIHAKTPIDLLIILGDFQSIRDGQDFKSIAIPPKYQRLGDFISYYNNEIEAPVPTIFIGGNHESMRHLMLLPHGGYVAKNIFYMGYSNVIWFKGIRIGSLSGIWKEWDFNKQRPDWNDLENNNWKANIRNLYHVRISDIAPLFMIKHRIDIMLSHDWPNGVVYHGDTKHLLKLKPFFEQDIKEGKLGSPVTWQLLRDLRPQWWLSAHLHVRFMASIKHNKRSHEPPNKSTSKTKKNNNEIDLDLSSDEDERSGIMNCQEENEYDSKYGETRFLALDKCLPRRRWLEILEIEPDTSHASWKDENHRMFWDPEFINNLVICQKNKNLLSNKPFNSVNWIELSQSNREEGRDIDWENYAIPAYTLDIQKDEVRQTKAFISKFMT</sequence>
<dbReference type="EC" id="3.1.4.-" evidence="6"/>
<dbReference type="EMBL" id="M62813">
    <property type="protein sequence ID" value="AAA34560.1"/>
    <property type="molecule type" value="Genomic_DNA"/>
</dbReference>
<dbReference type="EMBL" id="M94874">
    <property type="protein sequence ID" value="AAA35025.1"/>
    <property type="molecule type" value="Genomic_DNA"/>
</dbReference>
<dbReference type="EMBL" id="M86909">
    <property type="protein sequence ID" value="AAA35023.1"/>
    <property type="molecule type" value="Genomic_DNA"/>
</dbReference>
<dbReference type="EMBL" id="Z26877">
    <property type="protein sequence ID" value="CAA81504.1"/>
    <property type="molecule type" value="Genomic_DNA"/>
</dbReference>
<dbReference type="EMBL" id="Z28149">
    <property type="protein sequence ID" value="CAA81990.1"/>
    <property type="molecule type" value="Genomic_DNA"/>
</dbReference>
<dbReference type="EMBL" id="BK006944">
    <property type="protein sequence ID" value="DAA09014.1"/>
    <property type="molecule type" value="Genomic_DNA"/>
</dbReference>
<dbReference type="PIR" id="A38491">
    <property type="entry name" value="A38491"/>
</dbReference>
<dbReference type="RefSeq" id="NP_012773.1">
    <property type="nucleotide sequence ID" value="NM_001179715.1"/>
</dbReference>
<dbReference type="SMR" id="P24309"/>
<dbReference type="BioGRID" id="33988">
    <property type="interactions" value="207"/>
</dbReference>
<dbReference type="DIP" id="DIP-4858N"/>
<dbReference type="FunCoup" id="P24309">
    <property type="interactions" value="779"/>
</dbReference>
<dbReference type="IntAct" id="P24309">
    <property type="interactions" value="2"/>
</dbReference>
<dbReference type="STRING" id="4932.YKL149C"/>
<dbReference type="iPTMnet" id="P24309"/>
<dbReference type="PaxDb" id="4932-YKL149C"/>
<dbReference type="PeptideAtlas" id="P24309"/>
<dbReference type="EnsemblFungi" id="YKL149C_mRNA">
    <property type="protein sequence ID" value="YKL149C"/>
    <property type="gene ID" value="YKL149C"/>
</dbReference>
<dbReference type="GeneID" id="853708"/>
<dbReference type="KEGG" id="sce:YKL149C"/>
<dbReference type="AGR" id="SGD:S000001632"/>
<dbReference type="SGD" id="S000001632">
    <property type="gene designation" value="DBR1"/>
</dbReference>
<dbReference type="VEuPathDB" id="FungiDB:YKL149C"/>
<dbReference type="eggNOG" id="KOG2863">
    <property type="taxonomic scope" value="Eukaryota"/>
</dbReference>
<dbReference type="GeneTree" id="ENSGT00510000047481"/>
<dbReference type="HOGENOM" id="CLU_005893_1_0_1"/>
<dbReference type="InParanoid" id="P24309"/>
<dbReference type="OMA" id="KWWFSAH"/>
<dbReference type="OrthoDB" id="407609at2759"/>
<dbReference type="BioCyc" id="YEAST:G3O-31922-MONOMER"/>
<dbReference type="BioGRID-ORCS" id="853708">
    <property type="hits" value="1 hit in 10 CRISPR screens"/>
</dbReference>
<dbReference type="PRO" id="PR:P24309"/>
<dbReference type="Proteomes" id="UP000002311">
    <property type="component" value="Chromosome XI"/>
</dbReference>
<dbReference type="RNAct" id="P24309">
    <property type="molecule type" value="protein"/>
</dbReference>
<dbReference type="GO" id="GO:0005737">
    <property type="term" value="C:cytoplasm"/>
    <property type="evidence" value="ECO:0007669"/>
    <property type="project" value="UniProtKB-SubCell"/>
</dbReference>
<dbReference type="GO" id="GO:0005634">
    <property type="term" value="C:nucleus"/>
    <property type="evidence" value="ECO:0000318"/>
    <property type="project" value="GO_Central"/>
</dbReference>
<dbReference type="GO" id="GO:0005506">
    <property type="term" value="F:iron ion binding"/>
    <property type="evidence" value="ECO:0000314"/>
    <property type="project" value="UniProtKB"/>
</dbReference>
<dbReference type="GO" id="GO:0030145">
    <property type="term" value="F:manganese ion binding"/>
    <property type="evidence" value="ECO:0000314"/>
    <property type="project" value="UniProtKB"/>
</dbReference>
<dbReference type="GO" id="GO:0003723">
    <property type="term" value="F:RNA binding"/>
    <property type="evidence" value="ECO:0007669"/>
    <property type="project" value="UniProtKB-KW"/>
</dbReference>
<dbReference type="GO" id="GO:0008419">
    <property type="term" value="F:RNA lariat debranching enzyme activity"/>
    <property type="evidence" value="ECO:0000314"/>
    <property type="project" value="UniProtKB"/>
</dbReference>
<dbReference type="GO" id="GO:0008270">
    <property type="term" value="F:zinc ion binding"/>
    <property type="evidence" value="ECO:0000314"/>
    <property type="project" value="UniProtKB"/>
</dbReference>
<dbReference type="GO" id="GO:0000398">
    <property type="term" value="P:mRNA splicing, via spliceosome"/>
    <property type="evidence" value="ECO:0000315"/>
    <property type="project" value="SGD"/>
</dbReference>
<dbReference type="GO" id="GO:0007124">
    <property type="term" value="P:pseudohyphal growth"/>
    <property type="evidence" value="ECO:0000315"/>
    <property type="project" value="SGD"/>
</dbReference>
<dbReference type="GO" id="GO:0032197">
    <property type="term" value="P:retrotransposition"/>
    <property type="evidence" value="ECO:0000315"/>
    <property type="project" value="SGD"/>
</dbReference>
<dbReference type="GO" id="GO:0006401">
    <property type="term" value="P:RNA catabolic process"/>
    <property type="evidence" value="ECO:0000314"/>
    <property type="project" value="SGD"/>
</dbReference>
<dbReference type="GO" id="GO:0000375">
    <property type="term" value="P:RNA splicing, via transesterification reactions"/>
    <property type="evidence" value="ECO:0000314"/>
    <property type="project" value="UniProtKB"/>
</dbReference>
<dbReference type="GO" id="GO:0016074">
    <property type="term" value="P:sno(s)RNA metabolic process"/>
    <property type="evidence" value="ECO:0000315"/>
    <property type="project" value="SGD"/>
</dbReference>
<dbReference type="CDD" id="cd00844">
    <property type="entry name" value="MPP_Dbr1_N"/>
    <property type="match status" value="1"/>
</dbReference>
<dbReference type="Gene3D" id="3.60.21.10">
    <property type="match status" value="1"/>
</dbReference>
<dbReference type="InterPro" id="IPR004843">
    <property type="entry name" value="Calcineurin-like_PHP_ApaH"/>
</dbReference>
<dbReference type="InterPro" id="IPR007708">
    <property type="entry name" value="DBR1_C"/>
</dbReference>
<dbReference type="InterPro" id="IPR041816">
    <property type="entry name" value="Dbr1_N"/>
</dbReference>
<dbReference type="InterPro" id="IPR029052">
    <property type="entry name" value="Metallo-depent_PP-like"/>
</dbReference>
<dbReference type="PANTHER" id="PTHR12849:SF0">
    <property type="entry name" value="LARIAT DEBRANCHING ENZYME"/>
    <property type="match status" value="1"/>
</dbReference>
<dbReference type="PANTHER" id="PTHR12849">
    <property type="entry name" value="RNA LARIAT DEBRANCHING ENZYME"/>
    <property type="match status" value="1"/>
</dbReference>
<dbReference type="Pfam" id="PF05011">
    <property type="entry name" value="DBR1"/>
    <property type="match status" value="1"/>
</dbReference>
<dbReference type="Pfam" id="PF00149">
    <property type="entry name" value="Metallophos"/>
    <property type="match status" value="1"/>
</dbReference>
<dbReference type="SMART" id="SM01124">
    <property type="entry name" value="DBR1"/>
    <property type="match status" value="1"/>
</dbReference>
<dbReference type="SUPFAM" id="SSF56300">
    <property type="entry name" value="Metallo-dependent phosphatases"/>
    <property type="match status" value="1"/>
</dbReference>
<keyword id="KW-0963">Cytoplasm</keyword>
<keyword id="KW-0378">Hydrolase</keyword>
<keyword id="KW-0408">Iron</keyword>
<keyword id="KW-0464">Manganese</keyword>
<keyword id="KW-0479">Metal-binding</keyword>
<keyword id="KW-0507">mRNA processing</keyword>
<keyword id="KW-0539">Nucleus</keyword>
<keyword id="KW-0597">Phosphoprotein</keyword>
<keyword id="KW-1185">Reference proteome</keyword>
<keyword id="KW-0694">RNA-binding</keyword>
<keyword id="KW-0862">Zinc</keyword>
<organism>
    <name type="scientific">Saccharomyces cerevisiae (strain ATCC 204508 / S288c)</name>
    <name type="common">Baker's yeast</name>
    <dbReference type="NCBI Taxonomy" id="559292"/>
    <lineage>
        <taxon>Eukaryota</taxon>
        <taxon>Fungi</taxon>
        <taxon>Dikarya</taxon>
        <taxon>Ascomycota</taxon>
        <taxon>Saccharomycotina</taxon>
        <taxon>Saccharomycetes</taxon>
        <taxon>Saccharomycetales</taxon>
        <taxon>Saccharomycetaceae</taxon>
        <taxon>Saccharomyces</taxon>
    </lineage>
</organism>
<accession>P24309</accession>
<accession>D6VX48</accession>
<protein>
    <recommendedName>
        <fullName>Lariat debranching enzyme</fullName>
        <ecNumber evidence="6">3.1.4.-</ecNumber>
    </recommendedName>
</protein>
<gene>
    <name type="primary">DBR1</name>
    <name type="synonym">PRP26</name>
    <name type="ordered locus">YKL149C</name>
    <name type="ORF">YKL604</name>
</gene>
<evidence type="ECO:0000250" key="1">
    <source>
        <dbReference type="UniProtKB" id="C4M1P9"/>
    </source>
</evidence>
<evidence type="ECO:0000256" key="2">
    <source>
        <dbReference type="SAM" id="MobiDB-lite"/>
    </source>
</evidence>
<evidence type="ECO:0000269" key="3">
    <source>
    </source>
</evidence>
<evidence type="ECO:0000269" key="4">
    <source>
    </source>
</evidence>
<evidence type="ECO:0000269" key="5">
    <source>
    </source>
</evidence>
<evidence type="ECO:0000269" key="6">
    <source>
    </source>
</evidence>
<evidence type="ECO:0000305" key="7"/>
<evidence type="ECO:0007744" key="8">
    <source>
    </source>
</evidence>
<evidence type="ECO:0007744" key="9">
    <source>
    </source>
</evidence>